<feature type="chain" id="PRO_0000051698" description="Cytochrome P450 2C7">
    <location>
        <begin position="1"/>
        <end position="490"/>
    </location>
</feature>
<feature type="binding site" description="axial binding residue">
    <location>
        <position position="435"/>
    </location>
    <ligand>
        <name>heme</name>
        <dbReference type="ChEBI" id="CHEBI:30413"/>
    </ligand>
    <ligandPart>
        <name>Fe</name>
        <dbReference type="ChEBI" id="CHEBI:18248"/>
    </ligandPart>
</feature>
<feature type="modified residue" description="Dimethylated arginine" evidence="2">
    <location>
        <position position="144"/>
    </location>
</feature>
<feature type="sequence conflict" description="In Ref. 5; AAA41058." evidence="4" ref="5">
    <original>K</original>
    <variation>E</variation>
    <location>
        <position position="28"/>
    </location>
</feature>
<feature type="sequence conflict" description="In Ref. 2; CAA31108." evidence="4" ref="2">
    <original>FSKTYGPVF</original>
    <variation>VSIVGDPVI</variation>
    <location>
        <begin position="57"/>
        <end position="65"/>
    </location>
</feature>
<feature type="sequence conflict" description="In Ref. 6; no nucleotide entry." evidence="4" ref="6">
    <original>L</original>
    <variation>V</variation>
    <location>
        <position position="87"/>
    </location>
</feature>
<feature type="sequence conflict" description="In Ref. 5; AAA41058 and 6; no nucleotide entry." evidence="4" ref="5 6">
    <original>N</original>
    <variation>I</variation>
    <location>
        <position position="103"/>
    </location>
</feature>
<feature type="sequence conflict" description="In Ref. 6; no nucleotide entry." evidence="4" ref="6">
    <original>N</original>
    <variation>T</variation>
    <location>
        <position position="130"/>
    </location>
</feature>
<feature type="sequence conflict" description="In Ref. 5; AAA41058." evidence="4" ref="5">
    <original>Q</original>
    <variation>H</variation>
    <location>
        <position position="279"/>
    </location>
</feature>
<feature type="sequence conflict" description="In Ref. 5; AAA41058." evidence="4" ref="5">
    <original>MI</original>
    <variation>HD</variation>
    <location>
        <begin position="351"/>
        <end position="352"/>
    </location>
</feature>
<feature type="sequence conflict" description="In Ref. 6; no nucleotide entry." evidence="4" ref="6">
    <original>KGT</original>
    <variation>RRA</variation>
    <location>
        <begin position="383"/>
        <end position="385"/>
    </location>
</feature>
<feature type="sequence conflict" description="In Ref. 6; no nucleotide entry." evidence="4" ref="6">
    <original>DPGH</original>
    <variation>VPWP</variation>
    <location>
        <begin position="408"/>
        <end position="411"/>
    </location>
</feature>
<feature type="sequence conflict" description="In Ref. 6; no nucleotide entry." evidence="4" ref="6">
    <original>P</original>
    <variation>A</variation>
    <location>
        <position position="471"/>
    </location>
</feature>
<organism>
    <name type="scientific">Rattus norvegicus</name>
    <name type="common">Rat</name>
    <dbReference type="NCBI Taxonomy" id="10116"/>
    <lineage>
        <taxon>Eukaryota</taxon>
        <taxon>Metazoa</taxon>
        <taxon>Chordata</taxon>
        <taxon>Craniata</taxon>
        <taxon>Vertebrata</taxon>
        <taxon>Euteleostomi</taxon>
        <taxon>Mammalia</taxon>
        <taxon>Eutheria</taxon>
        <taxon>Euarchontoglires</taxon>
        <taxon>Glires</taxon>
        <taxon>Rodentia</taxon>
        <taxon>Myomorpha</taxon>
        <taxon>Muroidea</taxon>
        <taxon>Muridae</taxon>
        <taxon>Murinae</taxon>
        <taxon>Rattus</taxon>
    </lineage>
</organism>
<reference key="1">
    <citation type="journal article" date="1988" name="J. Biol. Chem.">
        <title>Complementary DNA cloning of cytochrome P-450s related to P-450(M-1) from the complementary DNA library of female rat livers. Predicted primary structures for P-450f, PB-1, and PB-1-related protein with a bizarre replacement block and their mode of transcriptional expression.</title>
        <authorList>
            <person name="Kimura H."/>
            <person name="Yoshioka H."/>
            <person name="Sogawa K."/>
            <person name="Sakai Y."/>
            <person name="Fujii-Kuriyama Y."/>
        </authorList>
    </citation>
    <scope>NUCLEOTIDE SEQUENCE [MRNA]</scope>
    <source>
        <tissue>Liver</tissue>
    </source>
</reference>
<reference key="2">
    <citation type="submission" date="1988-08" db="EMBL/GenBank/DDBJ databases">
        <title>5' flanking sequence of the gene for rat cytochrome p-450f.</title>
        <authorList>
            <person name="Stroem A."/>
            <person name="Nilsson A.G."/>
            <person name="Zaphiropoulos P.G."/>
        </authorList>
    </citation>
    <scope>NUCLEOTIDE SEQUENCE [GENOMIC DNA] OF 1-66</scope>
    <source>
        <strain>Sprague-Dawley</strain>
    </source>
</reference>
<reference key="3">
    <citation type="journal article" date="1990" name="Mol. Pharmacol.">
        <title>Growth hormone regulation of the cytochrome P-450IIC subfamily in the rat: inductive, repressive, and transcriptional effects on P-450f (IIC7) and P-450PB1 (IIC6) gene expression.</title>
        <authorList>
            <person name="Westin S."/>
            <person name="Stroem A."/>
            <person name="Gustafsson J.-A."/>
            <person name="Zaphiropoulos P.G."/>
        </authorList>
    </citation>
    <scope>NUCLEOTIDE SEQUENCE [MRNA] OF 1-56</scope>
    <scope>INDUCTION</scope>
</reference>
<reference key="4">
    <citation type="journal article" date="1987" name="J. Biol. Chem.">
        <title>Responses to insulin by two forms of rat hepatic microsomal cytochrome P-450 that undergo major (RLM6) and minor (RLM5b) elevations in diabetes.</title>
        <authorList>
            <person name="Favreau L.V."/>
            <person name="Malchoff D.M."/>
            <person name="Mole J.E."/>
            <person name="Schenkman J.B."/>
        </authorList>
    </citation>
    <scope>PROTEIN SEQUENCE OF 1-23</scope>
    <source>
        <tissue>Liver</tissue>
    </source>
</reference>
<reference key="5">
    <citation type="journal article" date="1986" name="J. Biol. Chem.">
        <title>Sequence of two related P-450 mRNAs transcriptionally increased during rat development. An R.dre.1 sequence occupies the complete 3' untranslated region of a liver mRNA.</title>
        <authorList>
            <person name="Gonzalez F.J."/>
            <person name="Kimura S."/>
            <person name="Song B.-J."/>
            <person name="Pastewka J."/>
            <person name="Gelboin H.V."/>
            <person name="Hardwick J.P."/>
        </authorList>
    </citation>
    <scope>NUCLEOTIDE SEQUENCE [MRNA] OF 8-490</scope>
</reference>
<reference key="6">
    <citation type="journal article" date="1986" name="Biochemistry">
        <title>Isolation and characterization of cDNA clones for cytochromes P-450 immunochemically related to rat hepatic P-450 form PB-1.</title>
        <authorList>
            <person name="Friedberg T."/>
            <person name="Waxman D.J."/>
            <person name="Atchison M."/>
            <person name="Kumar A."/>
            <person name="Haaparanta T."/>
            <person name="Raphael C."/>
            <person name="Adesnik M."/>
        </authorList>
    </citation>
    <scope>NUCLEOTIDE SEQUENCE OF 87-490</scope>
</reference>
<reference key="7">
    <citation type="journal article" date="2004" name="Mol. Biol. Cell">
        <title>Organellar proteomics reveals Golgi arginine dimethylation.</title>
        <authorList>
            <person name="Wu C.C."/>
            <person name="MacCoss M.J."/>
            <person name="Mardones G."/>
            <person name="Finnigan C."/>
            <person name="Mogelsvang S."/>
            <person name="Yates J.R. III"/>
            <person name="Howell K.E."/>
        </authorList>
    </citation>
    <scope>METHYLATION AT ARG-144</scope>
    <scope>IDENTIFICATION BY MASS SPECTROMETRY</scope>
</reference>
<gene>
    <name type="primary">Cyp2c7</name>
    <name type="synonym">Cyp2c-7</name>
</gene>
<name>CP2C7_RAT</name>
<accession>P05179</accession>
<accession>Q63706</accession>
<sequence length="490" mass="56187">MDLVTFLVLTLSSLILLSLWRQSSRRRKLPPGPTPLPIIGNFLQIDVKNISQSLTKFSKTYGPVFTLYLGSQPTVILHGYEAIKEALIDNGEKFSGRGSYPMNENVTKGFGIVFSNGNRWKEMRRFTIMNFRNLGIGKRNIEDRVQEEAQCLVEELRKTKGSPCDPSLILNCAPCNVICSITFQNHFDYKDKEMLTFMEKVNENLKIMSSPWMQVCNSFPSLIDYFPGTHHKIAKNINYMKSYLLKKIEEHQESLDVTNPRDFVDYYLIKQKQANNIEQSEYSHENLTCSIMDLIGAGTETMSTTLRYALLLLMKYPHVTAKVQEEIDRVIGRHRSPCMQDRKHMPYTDAMIHEVQRFINFVPTNLPHAVTCDIKFRNYLIPKGTKVLTSLTSVLHDSKEFPNPEMFDPGHFLDENGNFKKSDYFLPFSAGKRACVGEGLARMQLFLFLTTILQNFNLKSLVHPKDIDTMPVLNGFASLPPTYQLCFIPS</sequence>
<dbReference type="EC" id="1.14.14.1"/>
<dbReference type="EMBL" id="M18335">
    <property type="protein sequence ID" value="AAA41036.1"/>
    <property type="molecule type" value="mRNA"/>
</dbReference>
<dbReference type="EMBL" id="X12595">
    <property type="protein sequence ID" value="CAA31108.1"/>
    <property type="molecule type" value="Genomic_DNA"/>
</dbReference>
<dbReference type="EMBL" id="M31031">
    <property type="protein sequence ID" value="AAA41058.1"/>
    <property type="molecule type" value="mRNA"/>
</dbReference>
<dbReference type="PIR" id="B28516">
    <property type="entry name" value="B28516"/>
</dbReference>
<dbReference type="RefSeq" id="NP_058854.1">
    <property type="nucleotide sequence ID" value="NM_017158.2"/>
</dbReference>
<dbReference type="SMR" id="P05179"/>
<dbReference type="FunCoup" id="P05179">
    <property type="interactions" value="98"/>
</dbReference>
<dbReference type="IntAct" id="P05179">
    <property type="interactions" value="2"/>
</dbReference>
<dbReference type="STRING" id="10116.ENSRNOP00000045029"/>
<dbReference type="GlyGen" id="P05179">
    <property type="glycosylation" value="1 site"/>
</dbReference>
<dbReference type="iPTMnet" id="P05179"/>
<dbReference type="PhosphoSitePlus" id="P05179"/>
<dbReference type="PaxDb" id="10116-ENSRNOP00000045029"/>
<dbReference type="GeneID" id="29298"/>
<dbReference type="KEGG" id="rno:29298"/>
<dbReference type="AGR" id="RGD:620379"/>
<dbReference type="CTD" id="29298"/>
<dbReference type="RGD" id="620379">
    <property type="gene designation" value="Cyp2c7"/>
</dbReference>
<dbReference type="eggNOG" id="KOG0156">
    <property type="taxonomic scope" value="Eukaryota"/>
</dbReference>
<dbReference type="InParanoid" id="P05179"/>
<dbReference type="OrthoDB" id="59472at9989"/>
<dbReference type="PhylomeDB" id="P05179"/>
<dbReference type="PRO" id="PR:P05179"/>
<dbReference type="Proteomes" id="UP000002494">
    <property type="component" value="Unplaced"/>
</dbReference>
<dbReference type="GO" id="GO:0005737">
    <property type="term" value="C:cytoplasm"/>
    <property type="evidence" value="ECO:0000318"/>
    <property type="project" value="GO_Central"/>
</dbReference>
<dbReference type="GO" id="GO:0005789">
    <property type="term" value="C:endoplasmic reticulum membrane"/>
    <property type="evidence" value="ECO:0007669"/>
    <property type="project" value="UniProtKB-SubCell"/>
</dbReference>
<dbReference type="GO" id="GO:0043231">
    <property type="term" value="C:intracellular membrane-bounded organelle"/>
    <property type="evidence" value="ECO:0000318"/>
    <property type="project" value="GO_Central"/>
</dbReference>
<dbReference type="GO" id="GO:0020037">
    <property type="term" value="F:heme binding"/>
    <property type="evidence" value="ECO:0000318"/>
    <property type="project" value="GO_Central"/>
</dbReference>
<dbReference type="GO" id="GO:0005506">
    <property type="term" value="F:iron ion binding"/>
    <property type="evidence" value="ECO:0007669"/>
    <property type="project" value="InterPro"/>
</dbReference>
<dbReference type="GO" id="GO:0016712">
    <property type="term" value="F:oxidoreductase activity, acting on paired donors, with incorporation or reduction of molecular oxygen, reduced flavin or flavoprotein as one donor, and incorporation of one atom of oxygen"/>
    <property type="evidence" value="ECO:0000318"/>
    <property type="project" value="GO_Central"/>
</dbReference>
<dbReference type="GO" id="GO:0006082">
    <property type="term" value="P:organic acid metabolic process"/>
    <property type="evidence" value="ECO:0000318"/>
    <property type="project" value="GO_Central"/>
</dbReference>
<dbReference type="GO" id="GO:1904010">
    <property type="term" value="P:response to Aroclor 1254"/>
    <property type="evidence" value="ECO:0000270"/>
    <property type="project" value="RGD"/>
</dbReference>
<dbReference type="GO" id="GO:0045471">
    <property type="term" value="P:response to ethanol"/>
    <property type="evidence" value="ECO:0000270"/>
    <property type="project" value="RGD"/>
</dbReference>
<dbReference type="GO" id="GO:0032496">
    <property type="term" value="P:response to lipopolysaccharide"/>
    <property type="evidence" value="ECO:0000270"/>
    <property type="project" value="RGD"/>
</dbReference>
<dbReference type="GO" id="GO:0007584">
    <property type="term" value="P:response to nutrient"/>
    <property type="evidence" value="ECO:0000270"/>
    <property type="project" value="RGD"/>
</dbReference>
<dbReference type="GO" id="GO:0043434">
    <property type="term" value="P:response to peptide hormone"/>
    <property type="evidence" value="ECO:0000270"/>
    <property type="project" value="RGD"/>
</dbReference>
<dbReference type="GO" id="GO:0032526">
    <property type="term" value="P:response to retinoic acid"/>
    <property type="evidence" value="ECO:0000270"/>
    <property type="project" value="RGD"/>
</dbReference>
<dbReference type="GO" id="GO:1904772">
    <property type="term" value="P:response to tetrachloromethane"/>
    <property type="evidence" value="ECO:0000270"/>
    <property type="project" value="RGD"/>
</dbReference>
<dbReference type="GO" id="GO:0009410">
    <property type="term" value="P:response to xenobiotic stimulus"/>
    <property type="evidence" value="ECO:0000270"/>
    <property type="project" value="RGD"/>
</dbReference>
<dbReference type="GO" id="GO:0006805">
    <property type="term" value="P:xenobiotic metabolic process"/>
    <property type="evidence" value="ECO:0000318"/>
    <property type="project" value="GO_Central"/>
</dbReference>
<dbReference type="CDD" id="cd20665">
    <property type="entry name" value="CYP2C-like"/>
    <property type="match status" value="1"/>
</dbReference>
<dbReference type="FunFam" id="1.10.630.10:FF:000299">
    <property type="entry name" value="Cytochrome P450 2C9"/>
    <property type="match status" value="1"/>
</dbReference>
<dbReference type="Gene3D" id="1.10.630.10">
    <property type="entry name" value="Cytochrome P450"/>
    <property type="match status" value="1"/>
</dbReference>
<dbReference type="InterPro" id="IPR001128">
    <property type="entry name" value="Cyt_P450"/>
</dbReference>
<dbReference type="InterPro" id="IPR017972">
    <property type="entry name" value="Cyt_P450_CS"/>
</dbReference>
<dbReference type="InterPro" id="IPR002401">
    <property type="entry name" value="Cyt_P450_E_grp-I"/>
</dbReference>
<dbReference type="InterPro" id="IPR036396">
    <property type="entry name" value="Cyt_P450_sf"/>
</dbReference>
<dbReference type="InterPro" id="IPR050182">
    <property type="entry name" value="Cytochrome_P450_fam2"/>
</dbReference>
<dbReference type="PANTHER" id="PTHR24300:SF384">
    <property type="entry name" value="CYTOCHROME P450 2C29-RELATED"/>
    <property type="match status" value="1"/>
</dbReference>
<dbReference type="PANTHER" id="PTHR24300">
    <property type="entry name" value="CYTOCHROME P450 508A4-RELATED"/>
    <property type="match status" value="1"/>
</dbReference>
<dbReference type="Pfam" id="PF00067">
    <property type="entry name" value="p450"/>
    <property type="match status" value="1"/>
</dbReference>
<dbReference type="PRINTS" id="PR00463">
    <property type="entry name" value="EP450I"/>
</dbReference>
<dbReference type="PRINTS" id="PR00385">
    <property type="entry name" value="P450"/>
</dbReference>
<dbReference type="SUPFAM" id="SSF48264">
    <property type="entry name" value="Cytochrome P450"/>
    <property type="match status" value="1"/>
</dbReference>
<dbReference type="PROSITE" id="PS00086">
    <property type="entry name" value="CYTOCHROME_P450"/>
    <property type="match status" value="1"/>
</dbReference>
<evidence type="ECO:0000250" key="1"/>
<evidence type="ECO:0000269" key="2">
    <source>
    </source>
</evidence>
<evidence type="ECO:0000269" key="3">
    <source>
    </source>
</evidence>
<evidence type="ECO:0000305" key="4"/>
<keyword id="KW-0903">Direct protein sequencing</keyword>
<keyword id="KW-0256">Endoplasmic reticulum</keyword>
<keyword id="KW-0349">Heme</keyword>
<keyword id="KW-0408">Iron</keyword>
<keyword id="KW-0472">Membrane</keyword>
<keyword id="KW-0479">Metal-binding</keyword>
<keyword id="KW-0488">Methylation</keyword>
<keyword id="KW-0492">Microsome</keyword>
<keyword id="KW-0503">Monooxygenase</keyword>
<keyword id="KW-0560">Oxidoreductase</keyword>
<keyword id="KW-1185">Reference proteome</keyword>
<protein>
    <recommendedName>
        <fullName>Cytochrome P450 2C7</fullName>
        <ecNumber>1.14.14.1</ecNumber>
    </recommendedName>
    <alternativeName>
        <fullName>CYPIIC7</fullName>
    </alternativeName>
    <alternativeName>
        <fullName>Cytochrome P450F</fullName>
    </alternativeName>
    <alternativeName>
        <fullName>PTF1</fullName>
    </alternativeName>
</protein>
<proteinExistence type="evidence at protein level"/>
<comment type="function">
    <text>Cytochromes P450 are a group of heme-thiolate monooxygenases. In liver microsomes, this enzyme is involved in an NADPH-dependent electron transport pathway. It oxidizes a variety of structurally unrelated compounds, including steroids, fatty acids, and xenobiotics.</text>
</comment>
<comment type="catalytic activity">
    <reaction>
        <text>an organic molecule + reduced [NADPH--hemoprotein reductase] + O2 = an alcohol + oxidized [NADPH--hemoprotein reductase] + H2O + H(+)</text>
        <dbReference type="Rhea" id="RHEA:17149"/>
        <dbReference type="Rhea" id="RHEA-COMP:11964"/>
        <dbReference type="Rhea" id="RHEA-COMP:11965"/>
        <dbReference type="ChEBI" id="CHEBI:15377"/>
        <dbReference type="ChEBI" id="CHEBI:15378"/>
        <dbReference type="ChEBI" id="CHEBI:15379"/>
        <dbReference type="ChEBI" id="CHEBI:30879"/>
        <dbReference type="ChEBI" id="CHEBI:57618"/>
        <dbReference type="ChEBI" id="CHEBI:58210"/>
        <dbReference type="ChEBI" id="CHEBI:142491"/>
        <dbReference type="EC" id="1.14.14.1"/>
    </reaction>
</comment>
<comment type="cofactor">
    <cofactor evidence="1">
        <name>heme</name>
        <dbReference type="ChEBI" id="CHEBI:30413"/>
    </cofactor>
</comment>
<comment type="subcellular location">
    <subcellularLocation>
        <location>Endoplasmic reticulum membrane</location>
        <topology>Peripheral membrane protein</topology>
    </subcellularLocation>
    <subcellularLocation>
        <location>Microsome membrane</location>
        <topology>Peripheral membrane protein</topology>
    </subcellularLocation>
</comment>
<comment type="induction">
    <text evidence="3">By growth hormone. P450 can be induced to high levels in liver and other tissues by various foreign compounds, including drugs, pesticides, and carcinogens.</text>
</comment>
<comment type="similarity">
    <text evidence="4">Belongs to the cytochrome P450 family.</text>
</comment>